<gene>
    <name evidence="7" type="primary">TAR2</name>
    <name evidence="8" type="synonym">FIB</name>
    <name evidence="9" type="synonym">TAA1</name>
    <name evidence="12" type="ordered locus">Os01g0169800</name>
    <name evidence="10" type="ordered locus">LOC_Os01g07500</name>
    <name evidence="11" type="ORF">OJ1276_B06.34</name>
</gene>
<proteinExistence type="evidence at protein level"/>
<organism>
    <name type="scientific">Oryza sativa subsp. japonica</name>
    <name type="common">Rice</name>
    <dbReference type="NCBI Taxonomy" id="39947"/>
    <lineage>
        <taxon>Eukaryota</taxon>
        <taxon>Viridiplantae</taxon>
        <taxon>Streptophyta</taxon>
        <taxon>Embryophyta</taxon>
        <taxon>Tracheophyta</taxon>
        <taxon>Spermatophyta</taxon>
        <taxon>Magnoliopsida</taxon>
        <taxon>Liliopsida</taxon>
        <taxon>Poales</taxon>
        <taxon>Poaceae</taxon>
        <taxon>BOP clade</taxon>
        <taxon>Oryzoideae</taxon>
        <taxon>Oryzeae</taxon>
        <taxon>Oryzinae</taxon>
        <taxon>Oryza</taxon>
        <taxon>Oryza sativa</taxon>
    </lineage>
</organism>
<name>TAR2_ORYSJ</name>
<reference key="1">
    <citation type="journal article" date="2002" name="Nature">
        <title>The genome sequence and structure of rice chromosome 1.</title>
        <authorList>
            <person name="Sasaki T."/>
            <person name="Matsumoto T."/>
            <person name="Yamamoto K."/>
            <person name="Sakata K."/>
            <person name="Baba T."/>
            <person name="Katayose Y."/>
            <person name="Wu J."/>
            <person name="Niimura Y."/>
            <person name="Cheng Z."/>
            <person name="Nagamura Y."/>
            <person name="Antonio B.A."/>
            <person name="Kanamori H."/>
            <person name="Hosokawa S."/>
            <person name="Masukawa M."/>
            <person name="Arikawa K."/>
            <person name="Chiden Y."/>
            <person name="Hayashi M."/>
            <person name="Okamoto M."/>
            <person name="Ando T."/>
            <person name="Aoki H."/>
            <person name="Arita K."/>
            <person name="Hamada M."/>
            <person name="Harada C."/>
            <person name="Hijishita S."/>
            <person name="Honda M."/>
            <person name="Ichikawa Y."/>
            <person name="Idonuma A."/>
            <person name="Iijima M."/>
            <person name="Ikeda M."/>
            <person name="Ikeno M."/>
            <person name="Ito S."/>
            <person name="Ito T."/>
            <person name="Ito Y."/>
            <person name="Ito Y."/>
            <person name="Iwabuchi A."/>
            <person name="Kamiya K."/>
            <person name="Karasawa W."/>
            <person name="Katagiri S."/>
            <person name="Kikuta A."/>
            <person name="Kobayashi N."/>
            <person name="Kono I."/>
            <person name="Machita K."/>
            <person name="Maehara T."/>
            <person name="Mizuno H."/>
            <person name="Mizubayashi T."/>
            <person name="Mukai Y."/>
            <person name="Nagasaki H."/>
            <person name="Nakashima M."/>
            <person name="Nakama Y."/>
            <person name="Nakamichi Y."/>
            <person name="Nakamura M."/>
            <person name="Namiki N."/>
            <person name="Negishi M."/>
            <person name="Ohta I."/>
            <person name="Ono N."/>
            <person name="Saji S."/>
            <person name="Sakai K."/>
            <person name="Shibata M."/>
            <person name="Shimokawa T."/>
            <person name="Shomura A."/>
            <person name="Song J."/>
            <person name="Takazaki Y."/>
            <person name="Terasawa K."/>
            <person name="Tsuji K."/>
            <person name="Waki K."/>
            <person name="Yamagata H."/>
            <person name="Yamane H."/>
            <person name="Yoshiki S."/>
            <person name="Yoshihara R."/>
            <person name="Yukawa K."/>
            <person name="Zhong H."/>
            <person name="Iwama H."/>
            <person name="Endo T."/>
            <person name="Ito H."/>
            <person name="Hahn J.H."/>
            <person name="Kim H.-I."/>
            <person name="Eun M.-Y."/>
            <person name="Yano M."/>
            <person name="Jiang J."/>
            <person name="Gojobori T."/>
        </authorList>
    </citation>
    <scope>NUCLEOTIDE SEQUENCE [LARGE SCALE GENOMIC DNA]</scope>
    <source>
        <strain>cv. Nipponbare</strain>
    </source>
</reference>
<reference key="2">
    <citation type="journal article" date="2005" name="Nature">
        <title>The map-based sequence of the rice genome.</title>
        <authorList>
            <consortium name="International rice genome sequencing project (IRGSP)"/>
        </authorList>
    </citation>
    <scope>NUCLEOTIDE SEQUENCE [LARGE SCALE GENOMIC DNA]</scope>
    <source>
        <strain>cv. Nipponbare</strain>
    </source>
</reference>
<reference key="3">
    <citation type="journal article" date="2008" name="Nucleic Acids Res.">
        <title>The rice annotation project database (RAP-DB): 2008 update.</title>
        <authorList>
            <consortium name="The rice annotation project (RAP)"/>
        </authorList>
    </citation>
    <scope>GENOME REANNOTATION</scope>
    <source>
        <strain>cv. Nipponbare</strain>
    </source>
</reference>
<reference key="4">
    <citation type="journal article" date="2013" name="Rice">
        <title>Improvement of the Oryza sativa Nipponbare reference genome using next generation sequence and optical map data.</title>
        <authorList>
            <person name="Kawahara Y."/>
            <person name="de la Bastide M."/>
            <person name="Hamilton J.P."/>
            <person name="Kanamori H."/>
            <person name="McCombie W.R."/>
            <person name="Ouyang S."/>
            <person name="Schwartz D.C."/>
            <person name="Tanaka T."/>
            <person name="Wu J."/>
            <person name="Zhou S."/>
            <person name="Childs K.L."/>
            <person name="Davidson R.M."/>
            <person name="Lin H."/>
            <person name="Quesada-Ocampo L."/>
            <person name="Vaillancourt B."/>
            <person name="Sakai H."/>
            <person name="Lee S.S."/>
            <person name="Kim J."/>
            <person name="Numa H."/>
            <person name="Itoh T."/>
            <person name="Buell C.R."/>
            <person name="Matsumoto T."/>
        </authorList>
    </citation>
    <scope>GENOME REANNOTATION</scope>
    <source>
        <strain>cv. Nipponbare</strain>
    </source>
</reference>
<reference key="5">
    <citation type="journal article" date="2012" name="Physiol. Plantarum">
        <title>A large increase in IAA during development of rice grains correlates with the expression of tryptophan aminotransferase OsTAR1 and a grain-specific YUCCA.</title>
        <authorList>
            <person name="Abu-Zaitoon Y.M."/>
            <person name="Bennett K."/>
            <person name="Normanly J."/>
            <person name="Nonhebel H.M."/>
        </authorList>
    </citation>
    <scope>DEVELOPMENTAL STAGE</scope>
</reference>
<reference key="6">
    <citation type="journal article" date="2014" name="Plant J.">
        <title>The rice FISH BONE gene encodes a tryptophan aminotransferase, which affects pleiotropic auxin-related processes.</title>
        <authorList>
            <person name="Yoshikawa T."/>
            <person name="Ito M."/>
            <person name="Sumikura T."/>
            <person name="Nakayama A."/>
            <person name="Nishimura T."/>
            <person name="Kitano H."/>
            <person name="Yamaguchi I."/>
            <person name="Koshiba T."/>
            <person name="Hibara K."/>
            <person name="Nagato Y."/>
            <person name="Itoh J."/>
        </authorList>
    </citation>
    <scope>FUNCTION</scope>
    <scope>TISSUE SPECIFICITY</scope>
    <scope>MUTAGENESIS OF GLY-475</scope>
</reference>
<reference key="7">
    <citation type="journal article" date="2018" name="Front. Plant Sci.">
        <title>The YUCCA-auxin-WOX11 module controls crown root development in rice.</title>
        <authorList>
            <person name="Zhang T."/>
            <person name="Li R."/>
            <person name="Xing J."/>
            <person name="Yan L."/>
            <person name="Wang R."/>
            <person name="Zhao Y."/>
        </authorList>
    </citation>
    <scope>FUNCTION</scope>
    <scope>DISRUPTION PHENOTYPE</scope>
</reference>
<comment type="function">
    <text evidence="5 6">Probable tryptophan aminotransferase involved in auxin (IAA) biosynthesis (PubMed:24654985, PubMed:29740464). Required for auxin production to initiate multiple change in growth in response to environmental and developmental cues (PubMed:24654985, PubMed:29740464). Functions upstream of YUCCA1 in auxin biosynthesis (PubMed:29740464). Required for polar auxin transport (PubMed:24654985).</text>
</comment>
<comment type="catalytic activity">
    <reaction evidence="10">
        <text>L-tryptophan + 2-oxoglutarate = indole-3-pyruvate + L-glutamate</text>
        <dbReference type="Rhea" id="RHEA:14093"/>
        <dbReference type="ChEBI" id="CHEBI:16810"/>
        <dbReference type="ChEBI" id="CHEBI:17640"/>
        <dbReference type="ChEBI" id="CHEBI:29985"/>
        <dbReference type="ChEBI" id="CHEBI:57912"/>
        <dbReference type="EC" id="2.6.1.27"/>
    </reaction>
</comment>
<comment type="cofactor">
    <cofactor evidence="1">
        <name>pyridoxal 5'-phosphate</name>
        <dbReference type="ChEBI" id="CHEBI:597326"/>
    </cofactor>
</comment>
<comment type="pathway">
    <text evidence="10">Plant hormone metabolism; auxin biosynthesis.</text>
</comment>
<comment type="tissue specificity">
    <text evidence="5">Widely expressed.</text>
</comment>
<comment type="developmental stage">
    <text evidence="4">Expressed in developing grain from 1 to 21 days after pollination.</text>
</comment>
<comment type="disruption phenotype">
    <text evidence="6">Strong dwarf phenotype and pleiotropic developmental defects affecting all organs (PubMed:29740464). Reduced endogenous levels of auxin (PubMed:29740464).</text>
</comment>
<comment type="similarity">
    <text evidence="10">Belongs to the alliinase family.</text>
</comment>
<comment type="sequence caution" evidence="10">
    <conflict type="erroneous gene model prediction">
        <sequence resource="EMBL-CDS" id="BAF04049"/>
    </conflict>
</comment>
<sequence>MAALRVGTRAVEGRFQASNGGGGGGGGMAPSSRLVAAHREAKPRSSHSAAPWKLPRRRAGAMPLWRVAVFASVALNVATLALLLHHYATSPPPHHHHHDAGLATRSSDAAVHRRARTASSMAPSTGKPAVTTDSVINLDHGDPTMFEEFWRETGDAAEVVIPGWQTMSYFSDVTNVCWFLEPELDRQVRRLHRVVGNAAVDGYHVLVGTGSTQLFMAALYALAPDAAAAAAGEPISVVSTAPYYSSYPAVTDFLRSGLFRWAGDADAFKGDSYIELVCSPNNPDGAIREAVLDPKTGNGRTVHDLAYYWPQYTPITKRASHDIMLFTVSKSTGHAGTRIGWALVKDRAIARKMTKFVELNTIGVSKDSQMRAAKVLAAVSDGYERRPEQTKETMTTPLRLFDFGRRKMVERWSMLRAAAAASGIFSLPEETSGFCNFTKETAATNPAFAWLRCDREDVEDCAGFLRGHKILTRSGAQFGADARYVRVSMLDRDDAFDIFINRLSSLK</sequence>
<dbReference type="EC" id="2.6.1.27" evidence="10"/>
<dbReference type="EMBL" id="AB243735">
    <property type="protein sequence ID" value="BAI63217.1"/>
    <property type="molecule type" value="mRNA"/>
</dbReference>
<dbReference type="EMBL" id="AP003339">
    <property type="protein sequence ID" value="BAD68317.1"/>
    <property type="molecule type" value="Genomic_DNA"/>
</dbReference>
<dbReference type="EMBL" id="AP008207">
    <property type="protein sequence ID" value="BAF04049.1"/>
    <property type="status" value="ALT_SEQ"/>
    <property type="molecule type" value="Genomic_DNA"/>
</dbReference>
<dbReference type="EMBL" id="AP014957">
    <property type="protein sequence ID" value="BAS70606.1"/>
    <property type="molecule type" value="Genomic_DNA"/>
</dbReference>
<dbReference type="RefSeq" id="XP_015648041.1">
    <property type="nucleotide sequence ID" value="XM_015792555.1"/>
</dbReference>
<dbReference type="RefSeq" id="XP_015648050.1">
    <property type="nucleotide sequence ID" value="XM_015792564.1"/>
</dbReference>
<dbReference type="SMR" id="Q5VQG8"/>
<dbReference type="FunCoup" id="Q5VQG8">
    <property type="interactions" value="657"/>
</dbReference>
<dbReference type="STRING" id="39947.Q5VQG8"/>
<dbReference type="PaxDb" id="39947-Q5VQG8"/>
<dbReference type="EnsemblPlants" id="Os01t0169800-01">
    <property type="protein sequence ID" value="Os01t0169800-01"/>
    <property type="gene ID" value="Os01g0169800"/>
</dbReference>
<dbReference type="Gramene" id="Os01t0169800-01">
    <property type="protein sequence ID" value="Os01t0169800-01"/>
    <property type="gene ID" value="Os01g0169800"/>
</dbReference>
<dbReference type="KEGG" id="dosa:Os01g0169800"/>
<dbReference type="eggNOG" id="ENOG502QPYC">
    <property type="taxonomic scope" value="Eukaryota"/>
</dbReference>
<dbReference type="HOGENOM" id="CLU_036760_0_0_1"/>
<dbReference type="InParanoid" id="Q5VQG8"/>
<dbReference type="OrthoDB" id="2020362at2759"/>
<dbReference type="PlantReactome" id="R-OSA-1119330">
    <property type="pathway name" value="Alanine biosynthesis II"/>
</dbReference>
<dbReference type="PlantReactome" id="R-OSA-1119486">
    <property type="pathway name" value="IAA biosynthesis I"/>
</dbReference>
<dbReference type="UniPathway" id="UPA00151"/>
<dbReference type="Proteomes" id="UP000000763">
    <property type="component" value="Chromosome 1"/>
</dbReference>
<dbReference type="Proteomes" id="UP000059680">
    <property type="component" value="Chromosome 1"/>
</dbReference>
<dbReference type="GO" id="GO:0016846">
    <property type="term" value="F:carbon-sulfur lyase activity"/>
    <property type="evidence" value="ECO:0007669"/>
    <property type="project" value="InterPro"/>
</dbReference>
<dbReference type="GO" id="GO:0050362">
    <property type="term" value="F:L-tryptophan:2-oxoglutarate aminotransferase activity"/>
    <property type="evidence" value="ECO:0007669"/>
    <property type="project" value="UniProtKB-EC"/>
</dbReference>
<dbReference type="GO" id="GO:0008483">
    <property type="term" value="F:transaminase activity"/>
    <property type="evidence" value="ECO:0000318"/>
    <property type="project" value="GO_Central"/>
</dbReference>
<dbReference type="GO" id="GO:0006520">
    <property type="term" value="P:amino acid metabolic process"/>
    <property type="evidence" value="ECO:0000318"/>
    <property type="project" value="GO_Central"/>
</dbReference>
<dbReference type="GO" id="GO:0009851">
    <property type="term" value="P:auxin biosynthetic process"/>
    <property type="evidence" value="ECO:0000315"/>
    <property type="project" value="UniProtKB"/>
</dbReference>
<dbReference type="CDD" id="cd00609">
    <property type="entry name" value="AAT_like"/>
    <property type="match status" value="1"/>
</dbReference>
<dbReference type="FunFam" id="3.90.1150.10:FF:000132">
    <property type="entry name" value="L-tryptophan--pyruvate aminotransferase 1"/>
    <property type="match status" value="1"/>
</dbReference>
<dbReference type="FunFam" id="2.10.25.30:FF:000001">
    <property type="entry name" value="Tryptophan aminotransferase-related protein 1"/>
    <property type="match status" value="1"/>
</dbReference>
<dbReference type="Gene3D" id="3.90.1150.10">
    <property type="entry name" value="Aspartate Aminotransferase, domain 1"/>
    <property type="match status" value="1"/>
</dbReference>
<dbReference type="Gene3D" id="2.10.25.30">
    <property type="entry name" value="EGF-like, alliinase"/>
    <property type="match status" value="1"/>
</dbReference>
<dbReference type="Gene3D" id="3.40.640.10">
    <property type="entry name" value="Type I PLP-dependent aspartate aminotransferase-like (Major domain)"/>
    <property type="match status" value="1"/>
</dbReference>
<dbReference type="InterPro" id="IPR006948">
    <property type="entry name" value="Alliinase_C"/>
</dbReference>
<dbReference type="InterPro" id="IPR037029">
    <property type="entry name" value="Alliinase_N_sf"/>
</dbReference>
<dbReference type="InterPro" id="IPR050478">
    <property type="entry name" value="Ethylene_sulfur-biosynth"/>
</dbReference>
<dbReference type="InterPro" id="IPR015424">
    <property type="entry name" value="PyrdxlP-dep_Trfase"/>
</dbReference>
<dbReference type="InterPro" id="IPR015421">
    <property type="entry name" value="PyrdxlP-dep_Trfase_major"/>
</dbReference>
<dbReference type="InterPro" id="IPR015422">
    <property type="entry name" value="PyrdxlP-dep_Trfase_small"/>
</dbReference>
<dbReference type="PANTHER" id="PTHR43795">
    <property type="entry name" value="BIFUNCTIONAL ASPARTATE AMINOTRANSFERASE AND GLUTAMATE/ASPARTATE-PREPHENATE AMINOTRANSFERASE-RELATED"/>
    <property type="match status" value="1"/>
</dbReference>
<dbReference type="PANTHER" id="PTHR43795:SF111">
    <property type="entry name" value="TRYPTOPHAN AMINOTRANSFERASE-RELATED PROTEIN 2"/>
    <property type="match status" value="1"/>
</dbReference>
<dbReference type="Pfam" id="PF04864">
    <property type="entry name" value="Alliinase_C"/>
    <property type="match status" value="1"/>
</dbReference>
<dbReference type="SUPFAM" id="SSF53383">
    <property type="entry name" value="PLP-dependent transferases"/>
    <property type="match status" value="1"/>
</dbReference>
<evidence type="ECO:0000250" key="1">
    <source>
        <dbReference type="UniProtKB" id="Q9S7N2"/>
    </source>
</evidence>
<evidence type="ECO:0000255" key="2"/>
<evidence type="ECO:0000256" key="3">
    <source>
        <dbReference type="SAM" id="MobiDB-lite"/>
    </source>
</evidence>
<evidence type="ECO:0000269" key="4">
    <source>
    </source>
</evidence>
<evidence type="ECO:0000269" key="5">
    <source>
    </source>
</evidence>
<evidence type="ECO:0000269" key="6">
    <source>
    </source>
</evidence>
<evidence type="ECO:0000303" key="7">
    <source>
    </source>
</evidence>
<evidence type="ECO:0000303" key="8">
    <source>
    </source>
</evidence>
<evidence type="ECO:0000303" key="9">
    <source>
    </source>
</evidence>
<evidence type="ECO:0000305" key="10"/>
<evidence type="ECO:0000312" key="11">
    <source>
        <dbReference type="EMBL" id="BAD68317.1"/>
    </source>
</evidence>
<evidence type="ECO:0000312" key="12">
    <source>
        <dbReference type="EMBL" id="BAS70606.1"/>
    </source>
</evidence>
<feature type="chain" id="PRO_0000444624" description="Tryptophan aminotransferase-related protein 2">
    <location>
        <begin position="1"/>
        <end position="507"/>
    </location>
</feature>
<feature type="region of interest" description="Disordered" evidence="3">
    <location>
        <begin position="91"/>
        <end position="135"/>
    </location>
</feature>
<feature type="binding site" evidence="1">
    <location>
        <position position="169"/>
    </location>
    <ligand>
        <name>pyridoxal 5'-phosphate</name>
        <dbReference type="ChEBI" id="CHEBI:597326"/>
    </ligand>
</feature>
<feature type="binding site" evidence="1">
    <location>
        <begin position="211"/>
        <end position="212"/>
    </location>
    <ligand>
        <name>pyridoxal 5'-phosphate</name>
        <dbReference type="ChEBI" id="CHEBI:597326"/>
    </ligand>
</feature>
<feature type="binding site" evidence="1">
    <location>
        <position position="282"/>
    </location>
    <ligand>
        <name>pyridoxal 5'-phosphate</name>
        <dbReference type="ChEBI" id="CHEBI:597326"/>
    </ligand>
</feature>
<feature type="binding site" evidence="1">
    <location>
        <begin position="304"/>
        <end position="307"/>
    </location>
    <ligand>
        <name>pyridoxal 5'-phosphate</name>
        <dbReference type="ChEBI" id="CHEBI:597326"/>
    </ligand>
</feature>
<feature type="binding site" evidence="1">
    <location>
        <begin position="327"/>
        <end position="330"/>
    </location>
    <ligand>
        <name>pyridoxal 5'-phosphate</name>
        <dbReference type="ChEBI" id="CHEBI:597326"/>
    </ligand>
</feature>
<feature type="binding site" evidence="1">
    <location>
        <position position="338"/>
    </location>
    <ligand>
        <name>pyridoxal 5'-phosphate</name>
        <dbReference type="ChEBI" id="CHEBI:597326"/>
    </ligand>
</feature>
<feature type="modified residue" description="N6-(pyridoxal phosphate)lysine" evidence="2">
    <location>
        <position position="330"/>
    </location>
</feature>
<feature type="mutagenesis site" description="In fib-1; strong dwarf phenotype and pleiotropic developmental defects affecting all organs. Reduced endogenous levels of auxin." evidence="5">
    <original>G</original>
    <variation>R</variation>
    <location>
        <position position="475"/>
    </location>
</feature>
<keyword id="KW-0032">Aminotransferase</keyword>
<keyword id="KW-0073">Auxin biosynthesis</keyword>
<keyword id="KW-0663">Pyridoxal phosphate</keyword>
<keyword id="KW-1185">Reference proteome</keyword>
<keyword id="KW-0808">Transferase</keyword>
<accession>Q5VQG8</accession>
<accession>Q0JQC9</accession>
<protein>
    <recommendedName>
        <fullName evidence="7">Tryptophan aminotransferase-related protein 2</fullName>
        <shortName evidence="7">OsTAR2</shortName>
        <ecNumber evidence="10">2.6.1.27</ecNumber>
    </recommendedName>
    <alternativeName>
        <fullName evidence="8">Protein FISH BONE</fullName>
    </alternativeName>
</protein>